<protein>
    <recommendedName>
        <fullName evidence="1">Ribose-5-phosphate isomerase A</fullName>
        <ecNumber evidence="1">5.3.1.6</ecNumber>
    </recommendedName>
    <alternativeName>
        <fullName evidence="1">Phosphoriboisomerase A</fullName>
        <shortName evidence="1">PRI</shortName>
    </alternativeName>
</protein>
<keyword id="KW-0413">Isomerase</keyword>
<keyword id="KW-1185">Reference proteome</keyword>
<organism>
    <name type="scientific">Haloarcula marismortui (strain ATCC 43049 / DSM 3752 / JCM 8966 / VKM B-1809)</name>
    <name type="common">Halobacterium marismortui</name>
    <dbReference type="NCBI Taxonomy" id="272569"/>
    <lineage>
        <taxon>Archaea</taxon>
        <taxon>Methanobacteriati</taxon>
        <taxon>Methanobacteriota</taxon>
        <taxon>Stenosarchaea group</taxon>
        <taxon>Halobacteria</taxon>
        <taxon>Halobacteriales</taxon>
        <taxon>Haloarculaceae</taxon>
        <taxon>Haloarcula</taxon>
    </lineage>
</organism>
<reference key="1">
    <citation type="journal article" date="2004" name="Genome Res.">
        <title>Genome sequence of Haloarcula marismortui: a halophilic archaeon from the Dead Sea.</title>
        <authorList>
            <person name="Baliga N.S."/>
            <person name="Bonneau R."/>
            <person name="Facciotti M.T."/>
            <person name="Pan M."/>
            <person name="Glusman G."/>
            <person name="Deutsch E.W."/>
            <person name="Shannon P."/>
            <person name="Chiu Y."/>
            <person name="Weng R.S."/>
            <person name="Gan R.R."/>
            <person name="Hung P."/>
            <person name="Date S.V."/>
            <person name="Marcotte E."/>
            <person name="Hood L."/>
            <person name="Ng W.V."/>
        </authorList>
    </citation>
    <scope>NUCLEOTIDE SEQUENCE [LARGE SCALE GENOMIC DNA]</scope>
    <source>
        <strain>ATCC 43049 / DSM 3752 / JCM 8966 / VKM B-1809</strain>
    </source>
</reference>
<name>RPIA_HALMA</name>
<proteinExistence type="inferred from homology"/>
<evidence type="ECO:0000255" key="1">
    <source>
        <dbReference type="HAMAP-Rule" id="MF_00170"/>
    </source>
</evidence>
<feature type="chain" id="PRO_0000158507" description="Ribose-5-phosphate isomerase A">
    <location>
        <begin position="1"/>
        <end position="228"/>
    </location>
</feature>
<feature type="active site" description="Proton acceptor" evidence="1">
    <location>
        <position position="106"/>
    </location>
</feature>
<feature type="binding site" evidence="1">
    <location>
        <begin position="31"/>
        <end position="34"/>
    </location>
    <ligand>
        <name>substrate</name>
    </ligand>
</feature>
<feature type="binding site" evidence="1">
    <location>
        <begin position="85"/>
        <end position="88"/>
    </location>
    <ligand>
        <name>substrate</name>
    </ligand>
</feature>
<feature type="binding site" evidence="1">
    <location>
        <begin position="97"/>
        <end position="100"/>
    </location>
    <ligand>
        <name>substrate</name>
    </ligand>
</feature>
<feature type="binding site" evidence="1">
    <location>
        <position position="124"/>
    </location>
    <ligand>
        <name>substrate</name>
    </ligand>
</feature>
<sequence length="228" mass="23080">MKQGGSDAAKQAAGESAAEAVEDATVVGLGTGSTAAYAIRAIGQAVDAGLDVVGVPTSFQSRQLARDCGIPLADLDDVSVDLAIDGADEVASGNLIKGGGAAHAREKIVDASADRFLVVADPTKEAAVLSYPVPVEVLPMARSTVVTAVEELGGDPTLRRAERKDGPVVTDNGNLVLDCDFNSIHDPAALASDLAALPGVVEHGLFVGMADEIHVGTADGVTVRTLSK</sequence>
<dbReference type="EC" id="5.3.1.6" evidence="1"/>
<dbReference type="EMBL" id="AY596297">
    <property type="protein sequence ID" value="AAV47366.1"/>
    <property type="molecule type" value="Genomic_DNA"/>
</dbReference>
<dbReference type="RefSeq" id="WP_011224305.1">
    <property type="nucleotide sequence ID" value="NC_006396.1"/>
</dbReference>
<dbReference type="SMR" id="Q5UZD7"/>
<dbReference type="STRING" id="272569.rrnAC2572"/>
<dbReference type="PaxDb" id="272569-rrnAC2572"/>
<dbReference type="EnsemblBacteria" id="AAV47366">
    <property type="protein sequence ID" value="AAV47366"/>
    <property type="gene ID" value="rrnAC2572"/>
</dbReference>
<dbReference type="GeneID" id="40153458"/>
<dbReference type="KEGG" id="hma:rrnAC2572"/>
<dbReference type="PATRIC" id="fig|272569.17.peg.3174"/>
<dbReference type="eggNOG" id="arCOG01122">
    <property type="taxonomic scope" value="Archaea"/>
</dbReference>
<dbReference type="HOGENOM" id="CLU_056590_1_0_2"/>
<dbReference type="UniPathway" id="UPA00115">
    <property type="reaction ID" value="UER00412"/>
</dbReference>
<dbReference type="Proteomes" id="UP000001169">
    <property type="component" value="Chromosome I"/>
</dbReference>
<dbReference type="GO" id="GO:0005829">
    <property type="term" value="C:cytosol"/>
    <property type="evidence" value="ECO:0007669"/>
    <property type="project" value="TreeGrafter"/>
</dbReference>
<dbReference type="GO" id="GO:0004751">
    <property type="term" value="F:ribose-5-phosphate isomerase activity"/>
    <property type="evidence" value="ECO:0007669"/>
    <property type="project" value="UniProtKB-UniRule"/>
</dbReference>
<dbReference type="GO" id="GO:0006014">
    <property type="term" value="P:D-ribose metabolic process"/>
    <property type="evidence" value="ECO:0007669"/>
    <property type="project" value="TreeGrafter"/>
</dbReference>
<dbReference type="GO" id="GO:0009052">
    <property type="term" value="P:pentose-phosphate shunt, non-oxidative branch"/>
    <property type="evidence" value="ECO:0007669"/>
    <property type="project" value="UniProtKB-UniRule"/>
</dbReference>
<dbReference type="CDD" id="cd01398">
    <property type="entry name" value="RPI_A"/>
    <property type="match status" value="1"/>
</dbReference>
<dbReference type="FunFam" id="3.30.70.260:FF:000018">
    <property type="entry name" value="Ribose-5-phosphate isomerase A"/>
    <property type="match status" value="1"/>
</dbReference>
<dbReference type="FunFam" id="3.40.50.1360:FF:000001">
    <property type="entry name" value="Ribose-5-phosphate isomerase A"/>
    <property type="match status" value="1"/>
</dbReference>
<dbReference type="Gene3D" id="3.30.70.260">
    <property type="match status" value="1"/>
</dbReference>
<dbReference type="Gene3D" id="3.40.50.1360">
    <property type="match status" value="1"/>
</dbReference>
<dbReference type="HAMAP" id="MF_00170">
    <property type="entry name" value="Rib_5P_isom_A"/>
    <property type="match status" value="1"/>
</dbReference>
<dbReference type="InterPro" id="IPR037171">
    <property type="entry name" value="NagB/RpiA_transferase-like"/>
</dbReference>
<dbReference type="InterPro" id="IPR020672">
    <property type="entry name" value="Ribose5P_isomerase_typA_subgr"/>
</dbReference>
<dbReference type="InterPro" id="IPR004788">
    <property type="entry name" value="Ribose5P_isomerase_type_A"/>
</dbReference>
<dbReference type="NCBIfam" id="NF001924">
    <property type="entry name" value="PRK00702.1"/>
    <property type="match status" value="1"/>
</dbReference>
<dbReference type="NCBIfam" id="TIGR00021">
    <property type="entry name" value="rpiA"/>
    <property type="match status" value="1"/>
</dbReference>
<dbReference type="PANTHER" id="PTHR11934">
    <property type="entry name" value="RIBOSE-5-PHOSPHATE ISOMERASE"/>
    <property type="match status" value="1"/>
</dbReference>
<dbReference type="PANTHER" id="PTHR11934:SF0">
    <property type="entry name" value="RIBOSE-5-PHOSPHATE ISOMERASE"/>
    <property type="match status" value="1"/>
</dbReference>
<dbReference type="Pfam" id="PF06026">
    <property type="entry name" value="Rib_5-P_isom_A"/>
    <property type="match status" value="1"/>
</dbReference>
<dbReference type="SUPFAM" id="SSF75445">
    <property type="entry name" value="D-ribose-5-phosphate isomerase (RpiA), lid domain"/>
    <property type="match status" value="1"/>
</dbReference>
<dbReference type="SUPFAM" id="SSF100950">
    <property type="entry name" value="NagB/RpiA/CoA transferase-like"/>
    <property type="match status" value="1"/>
</dbReference>
<comment type="function">
    <text evidence="1">Catalyzes the reversible conversion of ribose-5-phosphate to ribulose 5-phosphate.</text>
</comment>
<comment type="catalytic activity">
    <reaction evidence="1">
        <text>aldehydo-D-ribose 5-phosphate = D-ribulose 5-phosphate</text>
        <dbReference type="Rhea" id="RHEA:14657"/>
        <dbReference type="ChEBI" id="CHEBI:58121"/>
        <dbReference type="ChEBI" id="CHEBI:58273"/>
        <dbReference type="EC" id="5.3.1.6"/>
    </reaction>
</comment>
<comment type="pathway">
    <text evidence="1">Carbohydrate degradation; pentose phosphate pathway; D-ribose 5-phosphate from D-ribulose 5-phosphate (non-oxidative stage): step 1/1.</text>
</comment>
<comment type="subunit">
    <text evidence="1">Homodimer.</text>
</comment>
<comment type="similarity">
    <text evidence="1">Belongs to the ribose 5-phosphate isomerase family.</text>
</comment>
<gene>
    <name evidence="1" type="primary">rpiA</name>
    <name type="ordered locus">rrnAC2572</name>
</gene>
<accession>Q5UZD7</accession>